<sequence length="432" mass="47256">MDVARNGARGSVESPPNRKVYMDYNATTPLEPEVIQAVTEAMKEAWGNPSSSYVAGRKAKDIINTARASLAKMIGGKPQDIIFTSGGTESNNLVIHSTVRCFHEQQTLQGRTVDQISPEEGTRPHFITCTVEHDSIRLPLEHLVEDQVAEVTFVPVSKVNGQVEVEDILAAVRPTTCLVTIMLANNETGVIMPISEISRRIKALNQIRAASGLPRVLVHTDAAQALGKRRVDVEDLGVDFLTIVGHKFYGPRIGALYVRGVGKLTPLYPMLFGGGQERNFRPGTENTPMIAGLGKAADLVSENCETYEAHMRDIRDYLEERLEAEFGKRIHLNSRFPGVERLPNTCNFSIQGSQLRGYMVLAQCQTLLASVGASCHSDHEDRPSPVLLSCGIPVDVARNAVRLSVGRSTTRAEVDLIVQDLKQAVNQLEGPV</sequence>
<feature type="chain" id="PRO_0000317014" description="Selenocysteine lyase">
    <location>
        <begin position="1"/>
        <end position="432"/>
    </location>
</feature>
<feature type="region of interest" description="Disordered" evidence="3">
    <location>
        <begin position="1"/>
        <end position="20"/>
    </location>
</feature>
<feature type="active site" description="S-selanylcysteine intermediate" evidence="4">
    <location>
        <position position="375"/>
    </location>
</feature>
<feature type="modified residue" description="N-acetylmethionine" evidence="1">
    <location>
        <position position="1"/>
    </location>
</feature>
<feature type="modified residue" description="Phosphoserine" evidence="1">
    <location>
        <position position="117"/>
    </location>
</feature>
<feature type="modified residue" description="N6-(pyridoxal phosphate)lysine" evidence="4 7 8 9">
    <location>
        <position position="247"/>
    </location>
</feature>
<feature type="mutagenesis site" description="Loss of selenocysteine lyase activity." evidence="4">
    <original>C</original>
    <variation>A</variation>
    <location>
        <position position="375"/>
    </location>
</feature>
<feature type="turn" evidence="10">
    <location>
        <begin position="24"/>
        <end position="26"/>
    </location>
</feature>
<feature type="helix" evidence="10">
    <location>
        <begin position="32"/>
        <end position="44"/>
    </location>
</feature>
<feature type="helix" evidence="10">
    <location>
        <begin position="54"/>
        <end position="74"/>
    </location>
</feature>
<feature type="helix" evidence="10">
    <location>
        <begin position="78"/>
        <end position="80"/>
    </location>
</feature>
<feature type="strand" evidence="10">
    <location>
        <begin position="81"/>
        <end position="85"/>
    </location>
</feature>
<feature type="helix" evidence="10">
    <location>
        <begin position="87"/>
        <end position="108"/>
    </location>
</feature>
<feature type="strand" evidence="10">
    <location>
        <begin position="125"/>
        <end position="129"/>
    </location>
</feature>
<feature type="helix" evidence="10">
    <location>
        <begin position="134"/>
        <end position="145"/>
    </location>
</feature>
<feature type="strand" evidence="10">
    <location>
        <begin position="150"/>
        <end position="154"/>
    </location>
</feature>
<feature type="turn" evidence="10">
    <location>
        <begin position="158"/>
        <end position="160"/>
    </location>
</feature>
<feature type="helix" evidence="10">
    <location>
        <begin position="165"/>
        <end position="170"/>
    </location>
</feature>
<feature type="strand" evidence="10">
    <location>
        <begin position="176"/>
        <end position="180"/>
    </location>
</feature>
<feature type="turn" evidence="10">
    <location>
        <begin position="186"/>
        <end position="188"/>
    </location>
</feature>
<feature type="helix" evidence="10">
    <location>
        <begin position="194"/>
        <end position="211"/>
    </location>
</feature>
<feature type="strand" evidence="10">
    <location>
        <begin position="217"/>
        <end position="221"/>
    </location>
</feature>
<feature type="turn" evidence="10">
    <location>
        <begin position="223"/>
        <end position="228"/>
    </location>
</feature>
<feature type="helix" evidence="10">
    <location>
        <begin position="233"/>
        <end position="236"/>
    </location>
</feature>
<feature type="strand" evidence="10">
    <location>
        <begin position="239"/>
        <end position="244"/>
    </location>
</feature>
<feature type="helix" evidence="10">
    <location>
        <begin position="245"/>
        <end position="247"/>
    </location>
</feature>
<feature type="strand" evidence="10">
    <location>
        <begin position="254"/>
        <end position="258"/>
    </location>
</feature>
<feature type="turn" evidence="10">
    <location>
        <begin position="259"/>
        <end position="263"/>
    </location>
</feature>
<feature type="helix" evidence="10">
    <location>
        <begin position="276"/>
        <end position="279"/>
    </location>
</feature>
<feature type="helix" evidence="10">
    <location>
        <begin position="287"/>
        <end position="326"/>
    </location>
</feature>
<feature type="helix" evidence="10">
    <location>
        <begin position="327"/>
        <end position="329"/>
    </location>
</feature>
<feature type="strand" evidence="10">
    <location>
        <begin position="330"/>
        <end position="334"/>
    </location>
</feature>
<feature type="strand" evidence="10">
    <location>
        <begin position="345"/>
        <end position="350"/>
    </location>
</feature>
<feature type="helix" evidence="10">
    <location>
        <begin position="357"/>
        <end position="363"/>
    </location>
</feature>
<feature type="strand" evidence="10">
    <location>
        <begin position="365"/>
        <end position="368"/>
    </location>
</feature>
<feature type="strand" evidence="10">
    <location>
        <begin position="370"/>
        <end position="372"/>
    </location>
</feature>
<feature type="helix" evidence="10">
    <location>
        <begin position="374"/>
        <end position="379"/>
    </location>
</feature>
<feature type="helix" evidence="10">
    <location>
        <begin position="385"/>
        <end position="389"/>
    </location>
</feature>
<feature type="helix" evidence="10">
    <location>
        <begin position="394"/>
        <end position="397"/>
    </location>
</feature>
<feature type="strand" evidence="10">
    <location>
        <begin position="400"/>
        <end position="404"/>
    </location>
</feature>
<feature type="helix" evidence="10">
    <location>
        <begin position="411"/>
        <end position="429"/>
    </location>
</feature>
<accession>Q68FT9</accession>
<keyword id="KW-0002">3D-structure</keyword>
<keyword id="KW-0007">Acetylation</keyword>
<keyword id="KW-0963">Cytoplasm</keyword>
<keyword id="KW-0456">Lyase</keyword>
<keyword id="KW-0597">Phosphoprotein</keyword>
<keyword id="KW-0663">Pyridoxal phosphate</keyword>
<keyword id="KW-1185">Reference proteome</keyword>
<keyword id="KW-0808">Transferase</keyword>
<evidence type="ECO:0000250" key="1">
    <source>
        <dbReference type="UniProtKB" id="Q96I15"/>
    </source>
</evidence>
<evidence type="ECO:0000250" key="2">
    <source>
        <dbReference type="UniProtKB" id="Q9JLI6"/>
    </source>
</evidence>
<evidence type="ECO:0000256" key="3">
    <source>
        <dbReference type="SAM" id="MobiDB-lite"/>
    </source>
</evidence>
<evidence type="ECO:0000269" key="4">
    <source>
    </source>
</evidence>
<evidence type="ECO:0000305" key="5"/>
<evidence type="ECO:0000305" key="6">
    <source>
    </source>
</evidence>
<evidence type="ECO:0007744" key="7">
    <source>
        <dbReference type="PDB" id="3A9X"/>
    </source>
</evidence>
<evidence type="ECO:0007744" key="8">
    <source>
        <dbReference type="PDB" id="3A9Y"/>
    </source>
</evidence>
<evidence type="ECO:0007744" key="9">
    <source>
        <dbReference type="PDB" id="3A9Z"/>
    </source>
</evidence>
<evidence type="ECO:0007829" key="10">
    <source>
        <dbReference type="PDB" id="3A9Z"/>
    </source>
</evidence>
<protein>
    <recommendedName>
        <fullName evidence="5">Selenocysteine lyase</fullName>
        <ecNumber evidence="4">4.4.1.16</ecNumber>
    </recommendedName>
</protein>
<gene>
    <name type="primary">Scly</name>
</gene>
<comment type="function">
    <text evidence="4">Catalyzes the decomposition of L-selenocysteine to L-alanine and elemental selenium.</text>
</comment>
<comment type="catalytic activity">
    <reaction evidence="4">
        <text>L-selenocysteine + AH2 = hydrogenselenide + L-alanine + A + H(+)</text>
        <dbReference type="Rhea" id="RHEA:11632"/>
        <dbReference type="ChEBI" id="CHEBI:13193"/>
        <dbReference type="ChEBI" id="CHEBI:15378"/>
        <dbReference type="ChEBI" id="CHEBI:17499"/>
        <dbReference type="ChEBI" id="CHEBI:29317"/>
        <dbReference type="ChEBI" id="CHEBI:57843"/>
        <dbReference type="ChEBI" id="CHEBI:57972"/>
        <dbReference type="EC" id="4.4.1.16"/>
    </reaction>
    <physiologicalReaction direction="left-to-right" evidence="6">
        <dbReference type="Rhea" id="RHEA:11633"/>
    </physiologicalReaction>
</comment>
<comment type="cofactor">
    <cofactor evidence="4">
        <name>pyridoxal 5'-phosphate</name>
        <dbReference type="ChEBI" id="CHEBI:597326"/>
    </cofactor>
</comment>
<comment type="biophysicochemical properties">
    <kinetics>
        <KM evidence="4">5.5 mM for L-selenocysteine</KM>
        <Vmax evidence="4">26.0 umol/min/mg enzyme</Vmax>
    </kinetics>
</comment>
<comment type="subunit">
    <text evidence="4">Homodimer.</text>
</comment>
<comment type="subcellular location">
    <subcellularLocation>
        <location evidence="2">Cytoplasm</location>
        <location evidence="2">Cytosol</location>
    </subcellularLocation>
</comment>
<comment type="similarity">
    <text evidence="5">Belongs to the class-V pyridoxal-phosphate-dependent aminotransferase family.</text>
</comment>
<dbReference type="EC" id="4.4.1.16" evidence="4"/>
<dbReference type="EMBL" id="BC079358">
    <property type="protein sequence ID" value="AAH79358.1"/>
    <property type="molecule type" value="mRNA"/>
</dbReference>
<dbReference type="RefSeq" id="NP_001007756.1">
    <property type="nucleotide sequence ID" value="NM_001007755.2"/>
</dbReference>
<dbReference type="PDB" id="3A9X">
    <property type="method" value="X-ray"/>
    <property type="resolution" value="2.00 A"/>
    <property type="chains" value="A/B=1-432"/>
</dbReference>
<dbReference type="PDB" id="3A9Y">
    <property type="method" value="X-ray"/>
    <property type="resolution" value="1.85 A"/>
    <property type="chains" value="A/B=1-432"/>
</dbReference>
<dbReference type="PDB" id="3A9Z">
    <property type="method" value="X-ray"/>
    <property type="resolution" value="1.55 A"/>
    <property type="chains" value="A/B=1-432"/>
</dbReference>
<dbReference type="PDBsum" id="3A9X"/>
<dbReference type="PDBsum" id="3A9Y"/>
<dbReference type="PDBsum" id="3A9Z"/>
<dbReference type="SMR" id="Q68FT9"/>
<dbReference type="FunCoup" id="Q68FT9">
    <property type="interactions" value="361"/>
</dbReference>
<dbReference type="STRING" id="10116.ENSRNOP00000027220"/>
<dbReference type="PhosphoSitePlus" id="Q68FT9"/>
<dbReference type="PaxDb" id="10116-ENSRNOP00000027220"/>
<dbReference type="Ensembl" id="ENSRNOT00000027220.6">
    <property type="protein sequence ID" value="ENSRNOP00000027220.4"/>
    <property type="gene ID" value="ENSRNOG00000020083.6"/>
</dbReference>
<dbReference type="GeneID" id="363285"/>
<dbReference type="KEGG" id="rno:363285"/>
<dbReference type="UCSC" id="RGD:1359514">
    <property type="organism name" value="rat"/>
</dbReference>
<dbReference type="AGR" id="RGD:1359514"/>
<dbReference type="CTD" id="51540"/>
<dbReference type="RGD" id="1359514">
    <property type="gene designation" value="Scly"/>
</dbReference>
<dbReference type="eggNOG" id="KOG1549">
    <property type="taxonomic scope" value="Eukaryota"/>
</dbReference>
<dbReference type="GeneTree" id="ENSGT00940000157773"/>
<dbReference type="HOGENOM" id="CLU_003433_0_0_1"/>
<dbReference type="InParanoid" id="Q68FT9"/>
<dbReference type="OMA" id="IIYGQSE"/>
<dbReference type="OrthoDB" id="10250117at2759"/>
<dbReference type="PhylomeDB" id="Q68FT9"/>
<dbReference type="TreeFam" id="TF313550"/>
<dbReference type="BRENDA" id="4.4.1.16">
    <property type="organism ID" value="5301"/>
</dbReference>
<dbReference type="Reactome" id="R-RNO-2408508">
    <property type="pathway name" value="Metabolism of ingested SeMet, Sec, MeSec into H2Se"/>
</dbReference>
<dbReference type="EvolutionaryTrace" id="Q68FT9"/>
<dbReference type="PRO" id="PR:Q68FT9"/>
<dbReference type="Proteomes" id="UP000002494">
    <property type="component" value="Chromosome 9"/>
</dbReference>
<dbReference type="Bgee" id="ENSRNOG00000020083">
    <property type="expression patterns" value="Expressed in adult mammalian kidney and 18 other cell types or tissues"/>
</dbReference>
<dbReference type="GO" id="GO:1902494">
    <property type="term" value="C:catalytic complex"/>
    <property type="evidence" value="ECO:0000314"/>
    <property type="project" value="CAFA"/>
</dbReference>
<dbReference type="GO" id="GO:0005829">
    <property type="term" value="C:cytosol"/>
    <property type="evidence" value="ECO:0007669"/>
    <property type="project" value="UniProtKB-SubCell"/>
</dbReference>
<dbReference type="GO" id="GO:0005794">
    <property type="term" value="C:Golgi apparatus"/>
    <property type="evidence" value="ECO:0007669"/>
    <property type="project" value="Ensembl"/>
</dbReference>
<dbReference type="GO" id="GO:0016597">
    <property type="term" value="F:amino acid binding"/>
    <property type="evidence" value="ECO:0000314"/>
    <property type="project" value="CAFA"/>
</dbReference>
<dbReference type="GO" id="GO:0042803">
    <property type="term" value="F:protein homodimerization activity"/>
    <property type="evidence" value="ECO:0000314"/>
    <property type="project" value="CAFA"/>
</dbReference>
<dbReference type="GO" id="GO:0009000">
    <property type="term" value="F:selenocysteine lyase activity"/>
    <property type="evidence" value="ECO:0000315"/>
    <property type="project" value="CAFA"/>
</dbReference>
<dbReference type="GO" id="GO:0016740">
    <property type="term" value="F:transferase activity"/>
    <property type="evidence" value="ECO:0007669"/>
    <property type="project" value="UniProtKB-KW"/>
</dbReference>
<dbReference type="GO" id="GO:0070279">
    <property type="term" value="F:vitamin B6 binding"/>
    <property type="evidence" value="ECO:0000314"/>
    <property type="project" value="CAFA"/>
</dbReference>
<dbReference type="GO" id="GO:0006629">
    <property type="term" value="P:lipid metabolic process"/>
    <property type="evidence" value="ECO:0000266"/>
    <property type="project" value="RGD"/>
</dbReference>
<dbReference type="GO" id="GO:1900408">
    <property type="term" value="P:negative regulation of cellular response to oxidative stress"/>
    <property type="evidence" value="ECO:0000266"/>
    <property type="project" value="RGD"/>
</dbReference>
<dbReference type="GO" id="GO:0032868">
    <property type="term" value="P:response to insulin"/>
    <property type="evidence" value="ECO:0000266"/>
    <property type="project" value="RGD"/>
</dbReference>
<dbReference type="GO" id="GO:0001887">
    <property type="term" value="P:selenium compound metabolic process"/>
    <property type="evidence" value="ECO:0000266"/>
    <property type="project" value="RGD"/>
</dbReference>
<dbReference type="GO" id="GO:0016261">
    <property type="term" value="P:selenocysteine catabolic process"/>
    <property type="evidence" value="ECO:0000315"/>
    <property type="project" value="CAFA"/>
</dbReference>
<dbReference type="DisProt" id="DP00620"/>
<dbReference type="FunFam" id="3.40.640.10:FF:000083">
    <property type="entry name" value="Selenocysteine lyase"/>
    <property type="match status" value="1"/>
</dbReference>
<dbReference type="FunFam" id="3.90.1150.10:FF:000065">
    <property type="entry name" value="Selenocysteine lyase"/>
    <property type="match status" value="1"/>
</dbReference>
<dbReference type="Gene3D" id="1.10.260.50">
    <property type="match status" value="1"/>
</dbReference>
<dbReference type="Gene3D" id="3.90.1150.10">
    <property type="entry name" value="Aspartate Aminotransferase, domain 1"/>
    <property type="match status" value="1"/>
</dbReference>
<dbReference type="Gene3D" id="3.40.640.10">
    <property type="entry name" value="Type I PLP-dependent aspartate aminotransferase-like (Major domain)"/>
    <property type="match status" value="1"/>
</dbReference>
<dbReference type="InterPro" id="IPR000192">
    <property type="entry name" value="Aminotrans_V_dom"/>
</dbReference>
<dbReference type="InterPro" id="IPR016454">
    <property type="entry name" value="Cysteine_dSase"/>
</dbReference>
<dbReference type="InterPro" id="IPR015424">
    <property type="entry name" value="PyrdxlP-dep_Trfase"/>
</dbReference>
<dbReference type="InterPro" id="IPR015421">
    <property type="entry name" value="PyrdxlP-dep_Trfase_major"/>
</dbReference>
<dbReference type="InterPro" id="IPR015422">
    <property type="entry name" value="PyrdxlP-dep_Trfase_small"/>
</dbReference>
<dbReference type="PANTHER" id="PTHR11601">
    <property type="entry name" value="CYSTEINE DESULFURYLASE FAMILY MEMBER"/>
    <property type="match status" value="1"/>
</dbReference>
<dbReference type="PANTHER" id="PTHR11601:SF62">
    <property type="entry name" value="SELENOCYSTEINE LYASE"/>
    <property type="match status" value="1"/>
</dbReference>
<dbReference type="Pfam" id="PF00266">
    <property type="entry name" value="Aminotran_5"/>
    <property type="match status" value="1"/>
</dbReference>
<dbReference type="PIRSF" id="PIRSF005572">
    <property type="entry name" value="NifS"/>
    <property type="match status" value="1"/>
</dbReference>
<dbReference type="SUPFAM" id="SSF53383">
    <property type="entry name" value="PLP-dependent transferases"/>
    <property type="match status" value="1"/>
</dbReference>
<name>SCLY_RAT</name>
<proteinExistence type="evidence at protein level"/>
<reference key="1">
    <citation type="journal article" date="2004" name="Genome Res.">
        <title>The status, quality, and expansion of the NIH full-length cDNA project: the Mammalian Gene Collection (MGC).</title>
        <authorList>
            <consortium name="The MGC Project Team"/>
        </authorList>
    </citation>
    <scope>NUCLEOTIDE SEQUENCE [LARGE SCALE MRNA]</scope>
    <source>
        <tissue>Kidney</tissue>
    </source>
</reference>
<reference key="2">
    <citation type="journal article" date="2010" name="J. Biol. Chem.">
        <title>Reaction mechanism and molecular basis for selenium/sulfur discrimination of selenocysteine lyase.</title>
        <authorList>
            <person name="Omi R."/>
            <person name="Kurokawa S."/>
            <person name="Mihara H."/>
            <person name="Hayashi H."/>
            <person name="Goto M."/>
            <person name="Miyahara I."/>
            <person name="Kurihara T."/>
            <person name="Hirotsu K."/>
            <person name="Esaki N."/>
        </authorList>
    </citation>
    <scope>X-RAY CRYSTALLOGRAPHY (1.55 ANGSTROMS) IN COMPLEX WITH PYRIDOXAL-PHOSPHATE</scope>
    <scope>COFACTOR</scope>
    <scope>SUBUNIT</scope>
    <scope>ACTIVE SITE</scope>
    <scope>BIOPHYSICOCHEMICAL PROPERTIES</scope>
    <scope>FUNCTION</scope>
    <scope>CATALYTIC ACTIVITY</scope>
    <scope>MUTAGENESIS OF CYS-375</scope>
</reference>
<organism>
    <name type="scientific">Rattus norvegicus</name>
    <name type="common">Rat</name>
    <dbReference type="NCBI Taxonomy" id="10116"/>
    <lineage>
        <taxon>Eukaryota</taxon>
        <taxon>Metazoa</taxon>
        <taxon>Chordata</taxon>
        <taxon>Craniata</taxon>
        <taxon>Vertebrata</taxon>
        <taxon>Euteleostomi</taxon>
        <taxon>Mammalia</taxon>
        <taxon>Eutheria</taxon>
        <taxon>Euarchontoglires</taxon>
        <taxon>Glires</taxon>
        <taxon>Rodentia</taxon>
        <taxon>Myomorpha</taxon>
        <taxon>Muroidea</taxon>
        <taxon>Muridae</taxon>
        <taxon>Murinae</taxon>
        <taxon>Rattus</taxon>
    </lineage>
</organism>